<feature type="chain" id="PRO_0000150087" description="Hdr-like menaquinol oxidoreductase iron-sulfur subunit">
    <location>
        <begin position="1"/>
        <end position="557"/>
    </location>
</feature>
<feature type="domain" description="4Fe-4S ferredoxin-type 1" evidence="2">
    <location>
        <begin position="86"/>
        <end position="115"/>
    </location>
</feature>
<feature type="domain" description="4Fe-4S ferredoxin-type 2" evidence="2">
    <location>
        <begin position="155"/>
        <end position="184"/>
    </location>
</feature>
<feature type="binding site" evidence="1">
    <location>
        <position position="95"/>
    </location>
    <ligand>
        <name>[4Fe-4S] cluster</name>
        <dbReference type="ChEBI" id="CHEBI:49883"/>
        <label>1</label>
    </ligand>
</feature>
<feature type="binding site" evidence="1">
    <location>
        <position position="98"/>
    </location>
    <ligand>
        <name>[4Fe-4S] cluster</name>
        <dbReference type="ChEBI" id="CHEBI:49883"/>
        <label>1</label>
    </ligand>
</feature>
<feature type="binding site" evidence="1">
    <location>
        <position position="101"/>
    </location>
    <ligand>
        <name>[4Fe-4S] cluster</name>
        <dbReference type="ChEBI" id="CHEBI:49883"/>
        <label>1</label>
    </ligand>
</feature>
<feature type="binding site" evidence="1">
    <location>
        <position position="105"/>
    </location>
    <ligand>
        <name>[4Fe-4S] cluster</name>
        <dbReference type="ChEBI" id="CHEBI:49883"/>
        <label>2</label>
    </ligand>
</feature>
<feature type="binding site" evidence="1">
    <location>
        <position position="164"/>
    </location>
    <ligand>
        <name>[4Fe-4S] cluster</name>
        <dbReference type="ChEBI" id="CHEBI:49883"/>
        <label>2</label>
    </ligand>
</feature>
<feature type="binding site" evidence="1">
    <location>
        <position position="167"/>
    </location>
    <ligand>
        <name>[4Fe-4S] cluster</name>
        <dbReference type="ChEBI" id="CHEBI:49883"/>
        <label>2</label>
    </ligand>
</feature>
<feature type="binding site" evidence="1">
    <location>
        <position position="170"/>
    </location>
    <ligand>
        <name>[4Fe-4S] cluster</name>
        <dbReference type="ChEBI" id="CHEBI:49883"/>
        <label>2</label>
    </ligand>
</feature>
<feature type="binding site" evidence="1">
    <location>
        <position position="174"/>
    </location>
    <ligand>
        <name>[4Fe-4S] cluster</name>
        <dbReference type="ChEBI" id="CHEBI:49883"/>
        <label>1</label>
    </ligand>
</feature>
<feature type="sequence conflict" description="In Ref. 2; AA sequence." evidence="4" ref="2">
    <original>K</original>
    <variation>KL</variation>
    <location>
        <position position="9"/>
    </location>
</feature>
<feature type="sequence conflict" description="In Ref. 2; AA sequence." evidence="4" ref="2">
    <original>D</original>
    <variation>Y</variation>
    <location>
        <position position="19"/>
    </location>
</feature>
<evidence type="ECO:0000255" key="1"/>
<evidence type="ECO:0000255" key="2">
    <source>
        <dbReference type="PROSITE-ProRule" id="PRU00711"/>
    </source>
</evidence>
<evidence type="ECO:0000269" key="3">
    <source>
    </source>
</evidence>
<evidence type="ECO:0000305" key="4"/>
<reference key="1">
    <citation type="journal article" date="2010" name="Stand. Genomic Sci.">
        <title>Complete genome sequence of Archaeoglobus profundus type strain (AV18).</title>
        <authorList>
            <person name="von Jan M."/>
            <person name="Lapidus A."/>
            <person name="Del Rio T.G."/>
            <person name="Copeland A."/>
            <person name="Tice H."/>
            <person name="Cheng J.F."/>
            <person name="Lucas S."/>
            <person name="Chen F."/>
            <person name="Nolan M."/>
            <person name="Goodwin L."/>
            <person name="Han C."/>
            <person name="Pitluck S."/>
            <person name="Liolios K."/>
            <person name="Ivanova N."/>
            <person name="Mavromatis K."/>
            <person name="Ovchinnikova G."/>
            <person name="Chertkov O."/>
            <person name="Pati A."/>
            <person name="Chen A."/>
            <person name="Palaniappan K."/>
            <person name="Land M."/>
            <person name="Hauser L."/>
            <person name="Chang Y.J."/>
            <person name="Jeffries C.D."/>
            <person name="Saunders E."/>
            <person name="Brettin T."/>
            <person name="Detter J.C."/>
            <person name="Chain P."/>
            <person name="Eichinger K."/>
            <person name="Huber H."/>
            <person name="Spring S."/>
            <person name="Rohde M."/>
            <person name="Goker M."/>
            <person name="Wirth R."/>
            <person name="Woyke T."/>
            <person name="Bristow J."/>
            <person name="Eisen J.A."/>
            <person name="Markowitz V."/>
            <person name="Hugenholtz P."/>
            <person name="Kyrpides N.C."/>
            <person name="Klenk H.P."/>
        </authorList>
    </citation>
    <scope>NUCLEOTIDE SEQUENCE [LARGE SCALE GENOMIC DNA]</scope>
    <source>
        <strain>DSM 5631 / JCM 9629 / NBRC 100127 / Av18</strain>
    </source>
</reference>
<reference evidence="4" key="2">
    <citation type="journal article" date="2004" name="Eur. J. Biochem.">
        <title>Two distinct heterodisulfide reductase-like enzymes in the sulfate-reducing archaeon Archaeoglobus profundus.</title>
        <authorList>
            <person name="Mander G.J."/>
            <person name="Pierik A.J."/>
            <person name="Huber H."/>
            <person name="Hedderich R."/>
        </authorList>
    </citation>
    <scope>PROTEIN SEQUENCE OF 3-21</scope>
    <scope>COFACTOR</scope>
    <scope>SUBCELLULAR LOCATION</scope>
</reference>
<dbReference type="EMBL" id="CP001857">
    <property type="protein sequence ID" value="ADB58775.1"/>
    <property type="molecule type" value="Genomic_DNA"/>
</dbReference>
<dbReference type="RefSeq" id="WP_012941110.1">
    <property type="nucleotide sequence ID" value="NC_013741.1"/>
</dbReference>
<dbReference type="STRING" id="572546.Arcpr_1730"/>
<dbReference type="PaxDb" id="572546-Arcpr_1730"/>
<dbReference type="GeneID" id="8740424"/>
<dbReference type="KEGG" id="apo:Arcpr_1730"/>
<dbReference type="eggNOG" id="arCOG00333">
    <property type="taxonomic scope" value="Archaea"/>
</dbReference>
<dbReference type="HOGENOM" id="CLU_023081_6_0_2"/>
<dbReference type="OrthoDB" id="42878at2157"/>
<dbReference type="Proteomes" id="UP000001901">
    <property type="component" value="Chromosome"/>
</dbReference>
<dbReference type="GO" id="GO:0016020">
    <property type="term" value="C:membrane"/>
    <property type="evidence" value="ECO:0007669"/>
    <property type="project" value="UniProtKB-SubCell"/>
</dbReference>
<dbReference type="GO" id="GO:0051539">
    <property type="term" value="F:4 iron, 4 sulfur cluster binding"/>
    <property type="evidence" value="ECO:0007669"/>
    <property type="project" value="UniProtKB-KW"/>
</dbReference>
<dbReference type="GO" id="GO:0046872">
    <property type="term" value="F:metal ion binding"/>
    <property type="evidence" value="ECO:0007669"/>
    <property type="project" value="UniProtKB-KW"/>
</dbReference>
<dbReference type="GO" id="GO:0016491">
    <property type="term" value="F:oxidoreductase activity"/>
    <property type="evidence" value="ECO:0007669"/>
    <property type="project" value="UniProtKB-KW"/>
</dbReference>
<dbReference type="Gene3D" id="1.10.1060.10">
    <property type="entry name" value="Alpha-helical ferredoxin"/>
    <property type="match status" value="1"/>
</dbReference>
<dbReference type="InterPro" id="IPR017896">
    <property type="entry name" value="4Fe4S_Fe-S-bd"/>
</dbReference>
<dbReference type="InterPro" id="IPR017900">
    <property type="entry name" value="4Fe4S_Fe_S_CS"/>
</dbReference>
<dbReference type="InterPro" id="IPR004017">
    <property type="entry name" value="Cys_rich_dom"/>
</dbReference>
<dbReference type="InterPro" id="IPR009051">
    <property type="entry name" value="Helical_ferredxn"/>
</dbReference>
<dbReference type="NCBIfam" id="NF045796">
    <property type="entry name" value="DsrK"/>
    <property type="match status" value="1"/>
</dbReference>
<dbReference type="PANTHER" id="PTHR43551">
    <property type="entry name" value="FUMARATE REDUCTASE IRON-SULFUR SUBUNIT"/>
    <property type="match status" value="1"/>
</dbReference>
<dbReference type="PANTHER" id="PTHR43551:SF1">
    <property type="entry name" value="HETERODISULFIDE REDUCTASE"/>
    <property type="match status" value="1"/>
</dbReference>
<dbReference type="Pfam" id="PF02754">
    <property type="entry name" value="CCG"/>
    <property type="match status" value="1"/>
</dbReference>
<dbReference type="Pfam" id="PF13183">
    <property type="entry name" value="Fer4_8"/>
    <property type="match status" value="1"/>
</dbReference>
<dbReference type="SUPFAM" id="SSF46548">
    <property type="entry name" value="alpha-helical ferredoxin"/>
    <property type="match status" value="1"/>
</dbReference>
<dbReference type="PROSITE" id="PS00198">
    <property type="entry name" value="4FE4S_FER_1"/>
    <property type="match status" value="1"/>
</dbReference>
<dbReference type="PROSITE" id="PS51379">
    <property type="entry name" value="4FE4S_FER_2"/>
    <property type="match status" value="2"/>
</dbReference>
<organism>
    <name type="scientific">Archaeoglobus profundus (strain DSM 5631 / JCM 9629 / NBRC 100127 / Av18)</name>
    <dbReference type="NCBI Taxonomy" id="572546"/>
    <lineage>
        <taxon>Archaea</taxon>
        <taxon>Methanobacteriati</taxon>
        <taxon>Methanobacteriota</taxon>
        <taxon>Archaeoglobi</taxon>
        <taxon>Archaeoglobales</taxon>
        <taxon>Archaeoglobaceae</taxon>
        <taxon>Archaeoglobus</taxon>
    </lineage>
</organism>
<proteinExistence type="evidence at protein level"/>
<keyword id="KW-0004">4Fe-4S</keyword>
<keyword id="KW-0903">Direct protein sequencing</keyword>
<keyword id="KW-0249">Electron transport</keyword>
<keyword id="KW-0408">Iron</keyword>
<keyword id="KW-0411">Iron-sulfur</keyword>
<keyword id="KW-0472">Membrane</keyword>
<keyword id="KW-0479">Metal-binding</keyword>
<keyword id="KW-0560">Oxidoreductase</keyword>
<keyword id="KW-1185">Reference proteome</keyword>
<keyword id="KW-0677">Repeat</keyword>
<keyword id="KW-0813">Transport</keyword>
<sequence length="557" mass="64255">MSEVPEELKIKQKFPNWYDWLKPITQKDIKHGFASYIALPKQVNSEFFKMPFGDVERDVFSEDWKLPENWKEIILDSFKETLEKNRAFKVFMDICVRCGACADKCHYYIGTGDPKNMPVMRAETVRSVYRYYFTIGGKLFGKWAGARPLDENVIKEWYYYLLQCSLCRRCSLFCPYGIDTAEVVWWARRMLSRVGLNQRFMCISIEASARTGNHLGLYAGGMAGSIEQGLSELKDITGFDLHTYINKPGADVLFVAPSADYFATPHWYAMLGYLLLFNELEERYGLTVTWSTYASEGGNFGTFHSYEAAQLLNSKIYKEAERLGVKFIIGGECGHMWRDKHQFINTMNNPPKHAEWKKFWDDPDLGQISEKLKGINLGEFISGEHGWIHVLEFVAALIKHKKIDIDPSRNDHWRATYHDPCNVARGMGMLEEPRYVLRNVMNNFYDMPEHTIREKTYCCAAGGGMLAEELMELRMRGVMPRMMALRYVVKKYGVNIMLTPCAIDKAQFPIAVDYWKIPVEIGGPMEMVGNALVLTAFGEKPEDRKYDLRGTPIREEE</sequence>
<comment type="function">
    <text>Has menaquinol-oxidizing activity. The HmeC and HmeD subunits may together mediate electron transfer from menaquinol to an unidentified electron acceptor on the cytoplasmic side of the membrane.</text>
</comment>
<comment type="cofactor">
    <cofactor evidence="3">
        <name>[4Fe-4S] cluster</name>
        <dbReference type="ChEBI" id="CHEBI:49883"/>
    </cofactor>
    <text evidence="3">Binds 2 [4Fe-4S] clusters per subunit.</text>
</comment>
<comment type="subcellular location">
    <subcellularLocation>
        <location evidence="3">Membrane</location>
        <topology evidence="3">Peripheral membrane protein</topology>
    </subcellularLocation>
</comment>
<name>HMED_ARCPA</name>
<gene>
    <name type="primary">hmeD</name>
    <name type="ordered locus">Arcpr_1730</name>
</gene>
<protein>
    <recommendedName>
        <fullName>Hdr-like menaquinol oxidoreductase iron-sulfur subunit</fullName>
        <shortName>Hme subunit D</shortName>
    </recommendedName>
</protein>
<accession>P84622</accession>
<accession>D2RF81</accession>